<keyword id="KW-0067">ATP-binding</keyword>
<keyword id="KW-0347">Helicase</keyword>
<keyword id="KW-0378">Hydrolase</keyword>
<keyword id="KW-0547">Nucleotide-binding</keyword>
<keyword id="KW-0539">Nucleus</keyword>
<keyword id="KW-1185">Reference proteome</keyword>
<keyword id="KW-0690">Ribosome biogenesis</keyword>
<keyword id="KW-0694">RNA-binding</keyword>
<keyword id="KW-0698">rRNA processing</keyword>
<sequence>MKRKLDANNVPSPEDSAGKSITAHSFETLKLDPRLLQALTQQKFTKPTPIQAEAIPLALDGKDVLARAKTGSGKTAAYLLPVLQSILQQKRNTPAHKSISALILVPTRELAEQVHRTAISFSAFSGKHVRSVNLTQKVSDAVQRSLLADLPDIVVSTPARAVANVNSSALSLERLTHLVIDEADLVLSYGYEEDMQSLAKAVPRGVQTFLMSATFTSEVDTLKGLFCRNPVVLKLEEKEDEGAGISQFVVRRCAEDEKFLLTYVIFKLQLVKGKCIIFVGDVDRCYRLKLFLEQFGIRSCVLNSELPVNSRIHVVQEFNKGVYDIIIAVDDQEVLGELRKNSKKQPRKSDQCSRDSEYDGAQTSRNNDQYSSEDDAETQPSKRPKKSAKEKDYGISRGIDFQNVACVLNFDLPTTSKSYTHRIGRTGRAGKTGMALSFVIPSDQFGKHKPTSIPSAKHDEAMLSKIIKRQDKLGREVKPYHFDMKQVDAFRYRMSDALRAVTRVAVQEARAREIRQELVKSEKLKRHFEENPEELRQLRHDGELRAARVQAHLKHVPDYLMPTKGRGSLSIGTGADVGFVGFKKTHENVIRKAREKNKGRGRGGKAGRGGKRVDPLKSFNSGGKH</sequence>
<dbReference type="EC" id="3.6.4.13"/>
<dbReference type="EMBL" id="CH476657">
    <property type="protein sequence ID" value="EDN07343.1"/>
    <property type="molecule type" value="Genomic_DNA"/>
</dbReference>
<dbReference type="SMR" id="A6R2L6"/>
<dbReference type="STRING" id="339724.A6R2L6"/>
<dbReference type="KEGG" id="aje:HCAG_03874"/>
<dbReference type="VEuPathDB" id="FungiDB:HCAG_03874"/>
<dbReference type="HOGENOM" id="CLU_003041_17_1_1"/>
<dbReference type="OMA" id="NASEQCV"/>
<dbReference type="OrthoDB" id="7139at299071"/>
<dbReference type="Proteomes" id="UP000009297">
    <property type="component" value="Unassembled WGS sequence"/>
</dbReference>
<dbReference type="GO" id="GO:0005829">
    <property type="term" value="C:cytosol"/>
    <property type="evidence" value="ECO:0007669"/>
    <property type="project" value="TreeGrafter"/>
</dbReference>
<dbReference type="GO" id="GO:0005730">
    <property type="term" value="C:nucleolus"/>
    <property type="evidence" value="ECO:0007669"/>
    <property type="project" value="UniProtKB-SubCell"/>
</dbReference>
<dbReference type="GO" id="GO:0005524">
    <property type="term" value="F:ATP binding"/>
    <property type="evidence" value="ECO:0007669"/>
    <property type="project" value="UniProtKB-KW"/>
</dbReference>
<dbReference type="GO" id="GO:0016887">
    <property type="term" value="F:ATP hydrolysis activity"/>
    <property type="evidence" value="ECO:0007669"/>
    <property type="project" value="RHEA"/>
</dbReference>
<dbReference type="GO" id="GO:0003723">
    <property type="term" value="F:RNA binding"/>
    <property type="evidence" value="ECO:0007669"/>
    <property type="project" value="UniProtKB-KW"/>
</dbReference>
<dbReference type="GO" id="GO:0003724">
    <property type="term" value="F:RNA helicase activity"/>
    <property type="evidence" value="ECO:0007669"/>
    <property type="project" value="UniProtKB-EC"/>
</dbReference>
<dbReference type="GO" id="GO:0006364">
    <property type="term" value="P:rRNA processing"/>
    <property type="evidence" value="ECO:0007669"/>
    <property type="project" value="UniProtKB-KW"/>
</dbReference>
<dbReference type="CDD" id="cd17961">
    <property type="entry name" value="DEADc_DDX56"/>
    <property type="match status" value="1"/>
</dbReference>
<dbReference type="CDD" id="cd18787">
    <property type="entry name" value="SF2_C_DEAD"/>
    <property type="match status" value="1"/>
</dbReference>
<dbReference type="Gene3D" id="3.40.50.300">
    <property type="entry name" value="P-loop containing nucleotide triphosphate hydrolases"/>
    <property type="match status" value="2"/>
</dbReference>
<dbReference type="InterPro" id="IPR011545">
    <property type="entry name" value="DEAD/DEAH_box_helicase_dom"/>
</dbReference>
<dbReference type="InterPro" id="IPR050079">
    <property type="entry name" value="DEAD_box_RNA_helicase"/>
</dbReference>
<dbReference type="InterPro" id="IPR014001">
    <property type="entry name" value="Helicase_ATP-bd"/>
</dbReference>
<dbReference type="InterPro" id="IPR001650">
    <property type="entry name" value="Helicase_C-like"/>
</dbReference>
<dbReference type="InterPro" id="IPR027417">
    <property type="entry name" value="P-loop_NTPase"/>
</dbReference>
<dbReference type="InterPro" id="IPR014014">
    <property type="entry name" value="RNA_helicase_DEAD_Q_motif"/>
</dbReference>
<dbReference type="PANTHER" id="PTHR47959">
    <property type="entry name" value="ATP-DEPENDENT RNA HELICASE RHLE-RELATED"/>
    <property type="match status" value="1"/>
</dbReference>
<dbReference type="PANTHER" id="PTHR47959:SF21">
    <property type="entry name" value="DEAD-BOX HELICASE 56"/>
    <property type="match status" value="1"/>
</dbReference>
<dbReference type="Pfam" id="PF00270">
    <property type="entry name" value="DEAD"/>
    <property type="match status" value="1"/>
</dbReference>
<dbReference type="Pfam" id="PF00271">
    <property type="entry name" value="Helicase_C"/>
    <property type="match status" value="2"/>
</dbReference>
<dbReference type="SMART" id="SM00487">
    <property type="entry name" value="DEXDc"/>
    <property type="match status" value="1"/>
</dbReference>
<dbReference type="SMART" id="SM00490">
    <property type="entry name" value="HELICc"/>
    <property type="match status" value="1"/>
</dbReference>
<dbReference type="SUPFAM" id="SSF52540">
    <property type="entry name" value="P-loop containing nucleoside triphosphate hydrolases"/>
    <property type="match status" value="2"/>
</dbReference>
<dbReference type="PROSITE" id="PS51192">
    <property type="entry name" value="HELICASE_ATP_BIND_1"/>
    <property type="match status" value="1"/>
</dbReference>
<dbReference type="PROSITE" id="PS51194">
    <property type="entry name" value="HELICASE_CTER"/>
    <property type="match status" value="1"/>
</dbReference>
<dbReference type="PROSITE" id="PS51195">
    <property type="entry name" value="Q_MOTIF"/>
    <property type="match status" value="1"/>
</dbReference>
<reference key="1">
    <citation type="journal article" date="2009" name="Genome Res.">
        <title>Comparative genomic analyses of the human fungal pathogens Coccidioides and their relatives.</title>
        <authorList>
            <person name="Sharpton T.J."/>
            <person name="Stajich J.E."/>
            <person name="Rounsley S.D."/>
            <person name="Gardner M.J."/>
            <person name="Wortman J.R."/>
            <person name="Jordar V.S."/>
            <person name="Maiti R."/>
            <person name="Kodira C.D."/>
            <person name="Neafsey D.E."/>
            <person name="Zeng Q."/>
            <person name="Hung C.-Y."/>
            <person name="McMahan C."/>
            <person name="Muszewska A."/>
            <person name="Grynberg M."/>
            <person name="Mandel M.A."/>
            <person name="Kellner E.M."/>
            <person name="Barker B.M."/>
            <person name="Galgiani J.N."/>
            <person name="Orbach M.J."/>
            <person name="Kirkland T.N."/>
            <person name="Cole G.T."/>
            <person name="Henn M.R."/>
            <person name="Birren B.W."/>
            <person name="Taylor J.W."/>
        </authorList>
    </citation>
    <scope>NUCLEOTIDE SEQUENCE [LARGE SCALE GENOMIC DNA]</scope>
    <source>
        <strain>NAm1 / WU24</strain>
    </source>
</reference>
<proteinExistence type="inferred from homology"/>
<evidence type="ECO:0000250" key="1"/>
<evidence type="ECO:0000255" key="2">
    <source>
        <dbReference type="PROSITE-ProRule" id="PRU00541"/>
    </source>
</evidence>
<evidence type="ECO:0000255" key="3">
    <source>
        <dbReference type="PROSITE-ProRule" id="PRU00542"/>
    </source>
</evidence>
<evidence type="ECO:0000256" key="4">
    <source>
        <dbReference type="SAM" id="MobiDB-lite"/>
    </source>
</evidence>
<evidence type="ECO:0000305" key="5"/>
<gene>
    <name type="primary">DBP9</name>
    <name type="ORF">HCAG_03874</name>
</gene>
<comment type="function">
    <text evidence="1">ATP-binding RNA helicase involved in the biogenesis of 60S ribosomal subunits and is required for the normal formation of 25S and 5.8S rRNAs.</text>
</comment>
<comment type="catalytic activity">
    <reaction>
        <text>ATP + H2O = ADP + phosphate + H(+)</text>
        <dbReference type="Rhea" id="RHEA:13065"/>
        <dbReference type="ChEBI" id="CHEBI:15377"/>
        <dbReference type="ChEBI" id="CHEBI:15378"/>
        <dbReference type="ChEBI" id="CHEBI:30616"/>
        <dbReference type="ChEBI" id="CHEBI:43474"/>
        <dbReference type="ChEBI" id="CHEBI:456216"/>
        <dbReference type="EC" id="3.6.4.13"/>
    </reaction>
</comment>
<comment type="subcellular location">
    <subcellularLocation>
        <location evidence="1">Nucleus</location>
        <location evidence="1">Nucleolus</location>
    </subcellularLocation>
</comment>
<comment type="domain">
    <text>The Q motif is unique to and characteristic of the DEAD box family of RNA helicases and controls ATP binding and hydrolysis.</text>
</comment>
<comment type="similarity">
    <text evidence="5">Belongs to the DEAD box helicase family. DDX56/DBP9 subfamily.</text>
</comment>
<feature type="chain" id="PRO_0000310254" description="ATP-dependent RNA helicase DBP9">
    <location>
        <begin position="1"/>
        <end position="625"/>
    </location>
</feature>
<feature type="domain" description="Helicase ATP-binding" evidence="2">
    <location>
        <begin position="55"/>
        <end position="233"/>
    </location>
</feature>
<feature type="domain" description="Helicase C-terminal" evidence="3">
    <location>
        <begin position="260"/>
        <end position="485"/>
    </location>
</feature>
<feature type="region of interest" description="Disordered" evidence="4">
    <location>
        <begin position="1"/>
        <end position="21"/>
    </location>
</feature>
<feature type="region of interest" description="Disordered" evidence="4">
    <location>
        <begin position="339"/>
        <end position="393"/>
    </location>
</feature>
<feature type="region of interest" description="Disordered" evidence="4">
    <location>
        <begin position="590"/>
        <end position="625"/>
    </location>
</feature>
<feature type="short sequence motif" description="Q motif">
    <location>
        <begin position="24"/>
        <end position="52"/>
    </location>
</feature>
<feature type="short sequence motif" description="DEAD box">
    <location>
        <begin position="181"/>
        <end position="184"/>
    </location>
</feature>
<feature type="compositionally biased region" description="Basic and acidic residues" evidence="4">
    <location>
        <begin position="347"/>
        <end position="357"/>
    </location>
</feature>
<feature type="compositionally biased region" description="Polar residues" evidence="4">
    <location>
        <begin position="361"/>
        <end position="370"/>
    </location>
</feature>
<feature type="compositionally biased region" description="Basic residues" evidence="4">
    <location>
        <begin position="599"/>
        <end position="610"/>
    </location>
</feature>
<feature type="binding site" evidence="2">
    <location>
        <begin position="68"/>
        <end position="75"/>
    </location>
    <ligand>
        <name>ATP</name>
        <dbReference type="ChEBI" id="CHEBI:30616"/>
    </ligand>
</feature>
<name>DBP9_AJECN</name>
<protein>
    <recommendedName>
        <fullName>ATP-dependent RNA helicase DBP9</fullName>
        <ecNumber>3.6.4.13</ecNumber>
    </recommendedName>
</protein>
<organism>
    <name type="scientific">Ajellomyces capsulatus (strain NAm1 / WU24)</name>
    <name type="common">Darling's disease fungus</name>
    <name type="synonym">Histoplasma capsulatum</name>
    <dbReference type="NCBI Taxonomy" id="2059318"/>
    <lineage>
        <taxon>Eukaryota</taxon>
        <taxon>Fungi</taxon>
        <taxon>Dikarya</taxon>
        <taxon>Ascomycota</taxon>
        <taxon>Pezizomycotina</taxon>
        <taxon>Eurotiomycetes</taxon>
        <taxon>Eurotiomycetidae</taxon>
        <taxon>Onygenales</taxon>
        <taxon>Ajellomycetaceae</taxon>
        <taxon>Histoplasma</taxon>
    </lineage>
</organism>
<accession>A6R2L6</accession>